<feature type="chain" id="PRO_0000246627" description="Serine/threonine-protein kinase 4">
    <location>
        <begin position="1"/>
        <end position="487"/>
    </location>
</feature>
<feature type="chain" id="PRO_0000413741" description="Serine/threonine-protein kinase 4 37kDa subunit">
    <location>
        <begin position="1"/>
        <end position="326"/>
    </location>
</feature>
<feature type="chain" id="PRO_0000413742" description="Serine/threonine-protein kinase 4 18kDa subunit">
    <location>
        <begin position="327"/>
        <end position="487"/>
    </location>
</feature>
<feature type="domain" description="Protein kinase" evidence="4">
    <location>
        <begin position="30"/>
        <end position="281"/>
    </location>
</feature>
<feature type="domain" description="SARAH" evidence="5">
    <location>
        <begin position="433"/>
        <end position="480"/>
    </location>
</feature>
<feature type="region of interest" description="Disordered" evidence="6">
    <location>
        <begin position="305"/>
        <end position="334"/>
    </location>
</feature>
<feature type="coiled-coil region" evidence="3">
    <location>
        <begin position="289"/>
        <end position="311"/>
    </location>
</feature>
<feature type="compositionally biased region" description="Acidic residues" evidence="6">
    <location>
        <begin position="313"/>
        <end position="326"/>
    </location>
</feature>
<feature type="active site" description="Proton acceptor" evidence="4">
    <location>
        <position position="149"/>
    </location>
</feature>
<feature type="binding site" evidence="4">
    <location>
        <begin position="36"/>
        <end position="44"/>
    </location>
    <ligand>
        <name>ATP</name>
        <dbReference type="ChEBI" id="CHEBI:30616"/>
    </ligand>
</feature>
<feature type="binding site" evidence="4">
    <location>
        <position position="59"/>
    </location>
    <ligand>
        <name>ATP</name>
        <dbReference type="ChEBI" id="CHEBI:30616"/>
    </ligand>
</feature>
<feature type="site" description="Cleavage; by caspase-3">
    <location>
        <begin position="326"/>
        <end position="327"/>
    </location>
</feature>
<feature type="modified residue" description="N-acetylmethionine" evidence="2">
    <location>
        <position position="1"/>
    </location>
</feature>
<feature type="modified residue" description="Phosphothreonine" evidence="2">
    <location>
        <position position="3"/>
    </location>
</feature>
<feature type="modified residue" description="Phosphothreonine; by autocatalysis" evidence="2">
    <location>
        <position position="183"/>
    </location>
</feature>
<feature type="modified residue" description="Phosphoserine" evidence="2">
    <location>
        <position position="265"/>
    </location>
</feature>
<feature type="modified residue" description="Phosphoserine" evidence="11 13">
    <location>
        <position position="320"/>
    </location>
</feature>
<feature type="modified residue" description="Phosphothreonine" evidence="2">
    <location>
        <position position="340"/>
    </location>
</feature>
<feature type="modified residue" description="Phosphothreonine" evidence="2">
    <location>
        <position position="367"/>
    </location>
</feature>
<feature type="modified residue" description="Phosphothreonine; by PKB/AKT1" evidence="2">
    <location>
        <position position="387"/>
    </location>
</feature>
<feature type="modified residue" description="Phosphoserine" evidence="2">
    <location>
        <position position="410"/>
    </location>
</feature>
<feature type="modified residue" description="Phosphotyrosine" evidence="12">
    <location>
        <position position="433"/>
    </location>
</feature>
<evidence type="ECO:0000250" key="1"/>
<evidence type="ECO:0000250" key="2">
    <source>
        <dbReference type="UniProtKB" id="Q13043"/>
    </source>
</evidence>
<evidence type="ECO:0000255" key="3"/>
<evidence type="ECO:0000255" key="4">
    <source>
        <dbReference type="PROSITE-ProRule" id="PRU00159"/>
    </source>
</evidence>
<evidence type="ECO:0000255" key="5">
    <source>
        <dbReference type="PROSITE-ProRule" id="PRU00310"/>
    </source>
</evidence>
<evidence type="ECO:0000256" key="6">
    <source>
        <dbReference type="SAM" id="MobiDB-lite"/>
    </source>
</evidence>
<evidence type="ECO:0000269" key="7">
    <source>
    </source>
</evidence>
<evidence type="ECO:0000269" key="8">
    <source>
    </source>
</evidence>
<evidence type="ECO:0000269" key="9">
    <source>
    </source>
</evidence>
<evidence type="ECO:0000305" key="10"/>
<evidence type="ECO:0007744" key="11">
    <source>
    </source>
</evidence>
<evidence type="ECO:0007744" key="12">
    <source>
    </source>
</evidence>
<evidence type="ECO:0007744" key="13">
    <source>
    </source>
</evidence>
<protein>
    <recommendedName>
        <fullName>Serine/threonine-protein kinase 4</fullName>
        <ecNumber>2.7.11.1</ecNumber>
    </recommendedName>
    <alternativeName>
        <fullName>Mammalian STE20-like protein kinase 1</fullName>
        <shortName>MST-1</shortName>
    </alternativeName>
    <alternativeName>
        <fullName>STE20-like kinase MST1</fullName>
    </alternativeName>
    <component>
        <recommendedName>
            <fullName>Serine/threonine-protein kinase 4 37kDa subunit</fullName>
            <shortName>MST1/N</shortName>
        </recommendedName>
    </component>
    <component>
        <recommendedName>
            <fullName>Serine/threonine-protein kinase 4 18kDa subunit</fullName>
            <shortName>MST1/C</shortName>
        </recommendedName>
    </component>
</protein>
<comment type="function">
    <text evidence="2 8">Stress-activated, pro-apoptotic kinase which, following caspase-cleavage, enters the nucleus and induces chromatin condensation followed by internucleosomal DNA fragmentation. Key component of the Hippo signaling pathway which plays a pivotal role in organ size control and tumor suppression by restricting proliferation and promoting apoptosis. The core of this pathway is composed of a kinase cascade wherein STK3/MST2 and STK4/MST1, in complex with its regulatory protein SAV1, phosphorylates and activates LATS1/2 in complex with its regulatory protein MOB1, which in turn phosphorylates and inactivates YAP1 oncoprotein and WWTR1/TAZ. Phosphorylation of YAP1 by LATS2 inhibits its translocation into the nucleus to regulate cellular genes important for cell proliferation, cell death, and cell migration. STK3/MST2 and STK4/MST1 are required to repress proliferation of mature hepatocytes, to prevent activation of facultative adult liver stem cells (oval cells), and to inhibit tumor formation. Phosphorylates 'Ser-14' of histone H2B (H2BS14ph) during apoptosis. Phosphorylates FOXO3 upon oxidative stress, which results in its nuclear translocation and cell death initiation. Phosphorylates MOBKL1A, MOBKL1B and RASSF2. Phosphorylates TNNI3 (cardiac Tn-I) and alters its binding affinity to TNNC1 (cardiac Tn-C) and TNNT2 (cardiac Tn-T). Phosphorylates FOXO1 on 'Ser-212' and regulates its activation and stimulates transcription of PMAIP1 in a FOXO1-dependent manner. Phosphorylates SIRT1 and inhibits SIRT1-mediated p53/TP53 deacetylation, thereby promoting p53/TP53 dependent transcription and apoptosis upon DNA damage. Acts as an inhibitor of PKB/AKT1. Phosphorylates AR on 'Ser-650' and suppresses its activity by intersecting with PKB/AKT1 signaling and antagonizing formation of AR-chromatin complexes (By similarity).</text>
</comment>
<comment type="catalytic activity">
    <reaction evidence="2">
        <text>L-seryl-[protein] + ATP = O-phospho-L-seryl-[protein] + ADP + H(+)</text>
        <dbReference type="Rhea" id="RHEA:17989"/>
        <dbReference type="Rhea" id="RHEA-COMP:9863"/>
        <dbReference type="Rhea" id="RHEA-COMP:11604"/>
        <dbReference type="ChEBI" id="CHEBI:15378"/>
        <dbReference type="ChEBI" id="CHEBI:29999"/>
        <dbReference type="ChEBI" id="CHEBI:30616"/>
        <dbReference type="ChEBI" id="CHEBI:83421"/>
        <dbReference type="ChEBI" id="CHEBI:456216"/>
        <dbReference type="EC" id="2.7.11.1"/>
    </reaction>
    <physiologicalReaction direction="left-to-right" evidence="2">
        <dbReference type="Rhea" id="RHEA:17990"/>
    </physiologicalReaction>
</comment>
<comment type="catalytic activity">
    <reaction evidence="2">
        <text>L-threonyl-[protein] + ATP = O-phospho-L-threonyl-[protein] + ADP + H(+)</text>
        <dbReference type="Rhea" id="RHEA:46608"/>
        <dbReference type="Rhea" id="RHEA-COMP:11060"/>
        <dbReference type="Rhea" id="RHEA-COMP:11605"/>
        <dbReference type="ChEBI" id="CHEBI:15378"/>
        <dbReference type="ChEBI" id="CHEBI:30013"/>
        <dbReference type="ChEBI" id="CHEBI:30616"/>
        <dbReference type="ChEBI" id="CHEBI:61977"/>
        <dbReference type="ChEBI" id="CHEBI:456216"/>
        <dbReference type="EC" id="2.7.11.1"/>
    </reaction>
    <physiologicalReaction direction="left-to-right" evidence="2">
        <dbReference type="Rhea" id="RHEA:46609"/>
    </physiologicalReaction>
</comment>
<comment type="cofactor">
    <cofactor evidence="1">
        <name>Mg(2+)</name>
        <dbReference type="ChEBI" id="CHEBI:18420"/>
    </cofactor>
</comment>
<comment type="activity regulation">
    <text evidence="1">Inhibited by the C-terminal non-catalytic region. Activated by caspase-cleavage. Full activation also requires homodimerization and autophosphorylation of Thr-183. Activated by RASSF1 which acts by preventing its dephosphorylation (By similarity).</text>
</comment>
<comment type="subunit">
    <text evidence="2 9">Homodimer; mediated via the coiled-coil region. Interacts with NORE1, which inhibits autoactivation. Interacts with and stabilizes SAV1. Interacts with RASSF1. Interacts with FOXO3. Interacts with RASSF2 (via SARAH domain). Interacts with AR, PKB/AKT1, TNNI3 and SIRT1. Interacts with MARK3 and SCRIB in the presence of DLG5 (By similarity). Interacts with DLG5 (via PDZ domain 3) (PubMed:28087714).</text>
</comment>
<comment type="interaction">
    <interactant intactId="EBI-1181352">
        <id>Q9JI11</id>
    </interactant>
    <interactant intactId="EBI-960530">
        <id>Q5EBH1</id>
        <label>Rassf5</label>
    </interactant>
    <organismsDiffer>false</organismsDiffer>
    <experiments>3</experiments>
</comment>
<comment type="subcellular location">
    <subcellularLocation>
        <location evidence="1">Cytoplasm</location>
    </subcellularLocation>
    <subcellularLocation>
        <location evidence="1">Nucleus</location>
    </subcellularLocation>
    <text evidence="1">The caspase-cleaved form cycles between nucleus and cytoplasm.</text>
</comment>
<comment type="PTM">
    <text evidence="2">Autophosphorylated on serine and threonine residues. Phosphorylation at Thr-387 by PKB/AKT1, leads to inhibition of its: kinase activity, nuclear translocation and autophosphorylation at Thr-183. It also diminishes its cleavage by caspases and its ability to phosphorylate FOXO3 (By similarity).</text>
</comment>
<comment type="PTM">
    <text evidence="7">Proteolytically cleaved by caspase-3 during apoptosis at Asp-326 resulting in a 37 kDa form. Proteolytic cleavage results in kinase activation and nuclear translocation of the truncated form (MST1/N).</text>
</comment>
<comment type="disruption phenotype">
    <text evidence="8">Mice show progressive hepatomegaly with a 2-fold increase in liver mass relative to total body mass at 1 month of age and a 3-fold increase by 3 months of age.</text>
</comment>
<comment type="similarity">
    <text evidence="10">Belongs to the protein kinase superfamily. STE Ser/Thr protein kinase family. STE20 subfamily.</text>
</comment>
<dbReference type="EC" id="2.7.11.1"/>
<dbReference type="EMBL" id="AF271360">
    <property type="protein sequence ID" value="AAF75789.1"/>
    <property type="molecule type" value="mRNA"/>
</dbReference>
<dbReference type="EMBL" id="AK028838">
    <property type="protein sequence ID" value="BAC26147.1"/>
    <property type="molecule type" value="mRNA"/>
</dbReference>
<dbReference type="EMBL" id="BC054521">
    <property type="protein sequence ID" value="AAH54521.1"/>
    <property type="molecule type" value="mRNA"/>
</dbReference>
<dbReference type="CCDS" id="CCDS17021.1"/>
<dbReference type="RefSeq" id="NP_067395.1">
    <property type="nucleotide sequence ID" value="NM_021420.4"/>
</dbReference>
<dbReference type="SMR" id="Q9JI11"/>
<dbReference type="BioGRID" id="208405">
    <property type="interactions" value="11"/>
</dbReference>
<dbReference type="FunCoup" id="Q9JI11">
    <property type="interactions" value="4634"/>
</dbReference>
<dbReference type="IntAct" id="Q9JI11">
    <property type="interactions" value="10"/>
</dbReference>
<dbReference type="MINT" id="Q9JI11"/>
<dbReference type="STRING" id="10090.ENSMUSP00000018353"/>
<dbReference type="iPTMnet" id="Q9JI11"/>
<dbReference type="PhosphoSitePlus" id="Q9JI11"/>
<dbReference type="SwissPalm" id="Q9JI11"/>
<dbReference type="jPOST" id="Q9JI11"/>
<dbReference type="PaxDb" id="10090-ENSMUSP00000018353"/>
<dbReference type="PeptideAtlas" id="Q9JI11"/>
<dbReference type="ProteomicsDB" id="258763"/>
<dbReference type="Pumba" id="Q9JI11"/>
<dbReference type="Antibodypedia" id="3325">
    <property type="antibodies" value="485 antibodies from 42 providers"/>
</dbReference>
<dbReference type="DNASU" id="58231"/>
<dbReference type="Ensembl" id="ENSMUST00000018353.14">
    <property type="protein sequence ID" value="ENSMUSP00000018353.8"/>
    <property type="gene ID" value="ENSMUSG00000018209.16"/>
</dbReference>
<dbReference type="GeneID" id="58231"/>
<dbReference type="KEGG" id="mmu:58231"/>
<dbReference type="UCSC" id="uc008ntt.1">
    <property type="organism name" value="mouse"/>
</dbReference>
<dbReference type="AGR" id="MGI:1929004"/>
<dbReference type="CTD" id="6789"/>
<dbReference type="MGI" id="MGI:1929004">
    <property type="gene designation" value="Stk4"/>
</dbReference>
<dbReference type="VEuPathDB" id="HostDB:ENSMUSG00000018209"/>
<dbReference type="eggNOG" id="KOG0574">
    <property type="taxonomic scope" value="Eukaryota"/>
</dbReference>
<dbReference type="GeneTree" id="ENSGT00940000159787"/>
<dbReference type="HOGENOM" id="CLU_000288_63_23_1"/>
<dbReference type="InParanoid" id="Q9JI11"/>
<dbReference type="OMA" id="CDAMKIT"/>
<dbReference type="OrthoDB" id="8693905at2759"/>
<dbReference type="PhylomeDB" id="Q9JI11"/>
<dbReference type="TreeFam" id="TF354217"/>
<dbReference type="Reactome" id="R-MMU-2028269">
    <property type="pathway name" value="Signaling by Hippo"/>
</dbReference>
<dbReference type="BioGRID-ORCS" id="58231">
    <property type="hits" value="3 hits in 81 CRISPR screens"/>
</dbReference>
<dbReference type="ChiTaRS" id="Stk4">
    <property type="organism name" value="mouse"/>
</dbReference>
<dbReference type="PRO" id="PR:Q9JI11"/>
<dbReference type="Proteomes" id="UP000000589">
    <property type="component" value="Chromosome 2"/>
</dbReference>
<dbReference type="RNAct" id="Q9JI11">
    <property type="molecule type" value="protein"/>
</dbReference>
<dbReference type="Bgee" id="ENSMUSG00000018209">
    <property type="expression patterns" value="Expressed in peripheral lymph node and 232 other cell types or tissues"/>
</dbReference>
<dbReference type="ExpressionAtlas" id="Q9JI11">
    <property type="expression patterns" value="baseline and differential"/>
</dbReference>
<dbReference type="GO" id="GO:0005737">
    <property type="term" value="C:cytoplasm"/>
    <property type="evidence" value="ECO:0000314"/>
    <property type="project" value="MGI"/>
</dbReference>
<dbReference type="GO" id="GO:0005829">
    <property type="term" value="C:cytosol"/>
    <property type="evidence" value="ECO:0007669"/>
    <property type="project" value="Ensembl"/>
</dbReference>
<dbReference type="GO" id="GO:0016604">
    <property type="term" value="C:nuclear body"/>
    <property type="evidence" value="ECO:0007669"/>
    <property type="project" value="Ensembl"/>
</dbReference>
<dbReference type="GO" id="GO:0005634">
    <property type="term" value="C:nucleus"/>
    <property type="evidence" value="ECO:0000314"/>
    <property type="project" value="MGI"/>
</dbReference>
<dbReference type="GO" id="GO:0032991">
    <property type="term" value="C:protein-containing complex"/>
    <property type="evidence" value="ECO:0000266"/>
    <property type="project" value="MGI"/>
</dbReference>
<dbReference type="GO" id="GO:0005524">
    <property type="term" value="F:ATP binding"/>
    <property type="evidence" value="ECO:0007669"/>
    <property type="project" value="UniProtKB-KW"/>
</dbReference>
<dbReference type="GO" id="GO:0000287">
    <property type="term" value="F:magnesium ion binding"/>
    <property type="evidence" value="ECO:0007669"/>
    <property type="project" value="Ensembl"/>
</dbReference>
<dbReference type="GO" id="GO:0042803">
    <property type="term" value="F:protein homodimerization activity"/>
    <property type="evidence" value="ECO:0000266"/>
    <property type="project" value="MGI"/>
</dbReference>
<dbReference type="GO" id="GO:0004672">
    <property type="term" value="F:protein kinase activity"/>
    <property type="evidence" value="ECO:0000266"/>
    <property type="project" value="MGI"/>
</dbReference>
<dbReference type="GO" id="GO:0106310">
    <property type="term" value="F:protein serine kinase activity"/>
    <property type="evidence" value="ECO:0007669"/>
    <property type="project" value="RHEA"/>
</dbReference>
<dbReference type="GO" id="GO:0004674">
    <property type="term" value="F:protein serine/threonine kinase activity"/>
    <property type="evidence" value="ECO:0000250"/>
    <property type="project" value="UniProtKB"/>
</dbReference>
<dbReference type="GO" id="GO:0061629">
    <property type="term" value="F:RNA polymerase II-specific DNA-binding transcription factor binding"/>
    <property type="evidence" value="ECO:0007669"/>
    <property type="project" value="Ensembl"/>
</dbReference>
<dbReference type="GO" id="GO:0006915">
    <property type="term" value="P:apoptotic process"/>
    <property type="evidence" value="ECO:0000316"/>
    <property type="project" value="MGI"/>
</dbReference>
<dbReference type="GO" id="GO:0001569">
    <property type="term" value="P:branching involved in blood vessel morphogenesis"/>
    <property type="evidence" value="ECO:0000316"/>
    <property type="project" value="MGI"/>
</dbReference>
<dbReference type="GO" id="GO:0060070">
    <property type="term" value="P:canonical Wnt signaling pathway"/>
    <property type="evidence" value="ECO:0000316"/>
    <property type="project" value="MGI"/>
</dbReference>
<dbReference type="GO" id="GO:0060706">
    <property type="term" value="P:cell differentiation involved in embryonic placenta development"/>
    <property type="evidence" value="ECO:0000316"/>
    <property type="project" value="MGI"/>
</dbReference>
<dbReference type="GO" id="GO:0000902">
    <property type="term" value="P:cell morphogenesis"/>
    <property type="evidence" value="ECO:0000266"/>
    <property type="project" value="MGI"/>
</dbReference>
<dbReference type="GO" id="GO:0008283">
    <property type="term" value="P:cell population proliferation"/>
    <property type="evidence" value="ECO:0000316"/>
    <property type="project" value="MGI"/>
</dbReference>
<dbReference type="GO" id="GO:0007417">
    <property type="term" value="P:central nervous system development"/>
    <property type="evidence" value="ECO:0000316"/>
    <property type="project" value="MGI"/>
</dbReference>
<dbReference type="GO" id="GO:0003157">
    <property type="term" value="P:endocardium development"/>
    <property type="evidence" value="ECO:0000316"/>
    <property type="project" value="MGI"/>
</dbReference>
<dbReference type="GO" id="GO:0050673">
    <property type="term" value="P:epithelial cell proliferation"/>
    <property type="evidence" value="ECO:0000316"/>
    <property type="project" value="MGI"/>
</dbReference>
<dbReference type="GO" id="GO:0008625">
    <property type="term" value="P:extrinsic apoptotic signaling pathway via death domain receptors"/>
    <property type="evidence" value="ECO:0000316"/>
    <property type="project" value="MGI"/>
</dbReference>
<dbReference type="GO" id="GO:0097284">
    <property type="term" value="P:hepatocyte apoptotic process"/>
    <property type="evidence" value="ECO:0000316"/>
    <property type="project" value="MGI"/>
</dbReference>
<dbReference type="GO" id="GO:0035329">
    <property type="term" value="P:hippo signaling"/>
    <property type="evidence" value="ECO:0000315"/>
    <property type="project" value="UniProtKB"/>
</dbReference>
<dbReference type="GO" id="GO:0030216">
    <property type="term" value="P:keratinocyte differentiation"/>
    <property type="evidence" value="ECO:0000316"/>
    <property type="project" value="MGI"/>
</dbReference>
<dbReference type="GO" id="GO:0090090">
    <property type="term" value="P:negative regulation of canonical Wnt signaling pathway"/>
    <property type="evidence" value="ECO:0000316"/>
    <property type="project" value="MGI"/>
</dbReference>
<dbReference type="GO" id="GO:0008285">
    <property type="term" value="P:negative regulation of cell population proliferation"/>
    <property type="evidence" value="ECO:0000316"/>
    <property type="project" value="MGI"/>
</dbReference>
<dbReference type="GO" id="GO:0050680">
    <property type="term" value="P:negative regulation of epithelial cell proliferation"/>
    <property type="evidence" value="ECO:0000316"/>
    <property type="project" value="MGI"/>
</dbReference>
<dbReference type="GO" id="GO:0046621">
    <property type="term" value="P:negative regulation of organ growth"/>
    <property type="evidence" value="ECO:0000316"/>
    <property type="project" value="MGI"/>
</dbReference>
<dbReference type="GO" id="GO:0001841">
    <property type="term" value="P:neural tube formation"/>
    <property type="evidence" value="ECO:0000316"/>
    <property type="project" value="MGI"/>
</dbReference>
<dbReference type="GO" id="GO:0035265">
    <property type="term" value="P:organ growth"/>
    <property type="evidence" value="ECO:0000316"/>
    <property type="project" value="MGI"/>
</dbReference>
<dbReference type="GO" id="GO:0043065">
    <property type="term" value="P:positive regulation of apoptotic process"/>
    <property type="evidence" value="ECO:0000316"/>
    <property type="project" value="MGI"/>
</dbReference>
<dbReference type="GO" id="GO:1902043">
    <property type="term" value="P:positive regulation of extrinsic apoptotic signaling pathway via death domain receptors"/>
    <property type="evidence" value="ECO:0000316"/>
    <property type="project" value="MGI"/>
</dbReference>
<dbReference type="GO" id="GO:0045600">
    <property type="term" value="P:positive regulation of fat cell differentiation"/>
    <property type="evidence" value="ECO:0000316"/>
    <property type="project" value="MGI"/>
</dbReference>
<dbReference type="GO" id="GO:1903945">
    <property type="term" value="P:positive regulation of hepatocyte apoptotic process"/>
    <property type="evidence" value="ECO:0000316"/>
    <property type="project" value="MGI"/>
</dbReference>
<dbReference type="GO" id="GO:0035332">
    <property type="term" value="P:positive regulation of hippo signaling"/>
    <property type="evidence" value="ECO:0000266"/>
    <property type="project" value="MGI"/>
</dbReference>
<dbReference type="GO" id="GO:1904237">
    <property type="term" value="P:positive regulation of substrate-dependent cell migration, cell attachment to substrate"/>
    <property type="evidence" value="ECO:0000315"/>
    <property type="project" value="CACAO"/>
</dbReference>
<dbReference type="GO" id="GO:0060215">
    <property type="term" value="P:primitive hemopoiesis"/>
    <property type="evidence" value="ECO:0000316"/>
    <property type="project" value="MGI"/>
</dbReference>
<dbReference type="GO" id="GO:0006606">
    <property type="term" value="P:protein import into nucleus"/>
    <property type="evidence" value="ECO:0007669"/>
    <property type="project" value="Ensembl"/>
</dbReference>
<dbReference type="GO" id="GO:0050821">
    <property type="term" value="P:protein stabilization"/>
    <property type="evidence" value="ECO:0000315"/>
    <property type="project" value="MGI"/>
</dbReference>
<dbReference type="GO" id="GO:0051262">
    <property type="term" value="P:protein tetramerization"/>
    <property type="evidence" value="ECO:0007669"/>
    <property type="project" value="InterPro"/>
</dbReference>
<dbReference type="GO" id="GO:0060800">
    <property type="term" value="P:regulation of cell differentiation involved in embryonic placenta development"/>
    <property type="evidence" value="ECO:0000316"/>
    <property type="project" value="MGI"/>
</dbReference>
<dbReference type="CDD" id="cd21887">
    <property type="entry name" value="SARAH_MST1"/>
    <property type="match status" value="1"/>
</dbReference>
<dbReference type="CDD" id="cd06612">
    <property type="entry name" value="STKc_MST1_2"/>
    <property type="match status" value="1"/>
</dbReference>
<dbReference type="FunFam" id="1.10.510.10:FF:000075">
    <property type="entry name" value="Serine/threonine-protein kinase 3"/>
    <property type="match status" value="1"/>
</dbReference>
<dbReference type="FunFam" id="3.30.200.20:FF:000410">
    <property type="entry name" value="Serine/threonine-protein kinase 3"/>
    <property type="match status" value="1"/>
</dbReference>
<dbReference type="FunFam" id="4.10.170.10:FF:000002">
    <property type="entry name" value="serine/threonine-protein kinase 3"/>
    <property type="match status" value="1"/>
</dbReference>
<dbReference type="FunFam" id="1.10.287.4270:FF:000004">
    <property type="entry name" value="Serine/threonine-protein kinase 3/4"/>
    <property type="match status" value="1"/>
</dbReference>
<dbReference type="FunFam" id="1.10.287.4270:FF:000002">
    <property type="entry name" value="Serine/threonine-protein kinase 4"/>
    <property type="match status" value="1"/>
</dbReference>
<dbReference type="Gene3D" id="1.10.287.4270">
    <property type="match status" value="1"/>
</dbReference>
<dbReference type="Gene3D" id="4.10.170.10">
    <property type="entry name" value="p53-like tetramerisation domain"/>
    <property type="match status" value="1"/>
</dbReference>
<dbReference type="Gene3D" id="1.10.510.10">
    <property type="entry name" value="Transferase(Phosphotransferase) domain 1"/>
    <property type="match status" value="1"/>
</dbReference>
<dbReference type="InterPro" id="IPR011009">
    <property type="entry name" value="Kinase-like_dom_sf"/>
</dbReference>
<dbReference type="InterPro" id="IPR024205">
    <property type="entry name" value="Mst1_2_SARAH_domain"/>
</dbReference>
<dbReference type="InterPro" id="IPR036674">
    <property type="entry name" value="p53_tetramer_sf"/>
</dbReference>
<dbReference type="InterPro" id="IPR000719">
    <property type="entry name" value="Prot_kinase_dom"/>
</dbReference>
<dbReference type="InterPro" id="IPR017441">
    <property type="entry name" value="Protein_kinase_ATP_BS"/>
</dbReference>
<dbReference type="InterPro" id="IPR011524">
    <property type="entry name" value="SARAH_dom"/>
</dbReference>
<dbReference type="InterPro" id="IPR050629">
    <property type="entry name" value="STE20/SPS1-PAK"/>
</dbReference>
<dbReference type="PANTHER" id="PTHR48012:SF2">
    <property type="entry name" value="STERILE20-LIKE KINASE, ISOFORM B"/>
    <property type="match status" value="1"/>
</dbReference>
<dbReference type="PANTHER" id="PTHR48012">
    <property type="entry name" value="STERILE20-LIKE KINASE, ISOFORM B-RELATED"/>
    <property type="match status" value="1"/>
</dbReference>
<dbReference type="Pfam" id="PF11629">
    <property type="entry name" value="Mst1_SARAH"/>
    <property type="match status" value="1"/>
</dbReference>
<dbReference type="Pfam" id="PF00069">
    <property type="entry name" value="Pkinase"/>
    <property type="match status" value="1"/>
</dbReference>
<dbReference type="SMART" id="SM00220">
    <property type="entry name" value="S_TKc"/>
    <property type="match status" value="1"/>
</dbReference>
<dbReference type="SUPFAM" id="SSF56112">
    <property type="entry name" value="Protein kinase-like (PK-like)"/>
    <property type="match status" value="1"/>
</dbReference>
<dbReference type="PROSITE" id="PS00107">
    <property type="entry name" value="PROTEIN_KINASE_ATP"/>
    <property type="match status" value="1"/>
</dbReference>
<dbReference type="PROSITE" id="PS50011">
    <property type="entry name" value="PROTEIN_KINASE_DOM"/>
    <property type="match status" value="1"/>
</dbReference>
<dbReference type="PROSITE" id="PS50951">
    <property type="entry name" value="SARAH"/>
    <property type="match status" value="1"/>
</dbReference>
<gene>
    <name type="primary">Stk4</name>
    <name type="synonym">Mst1</name>
</gene>
<proteinExistence type="evidence at protein level"/>
<name>STK4_MOUSE</name>
<accession>Q9JI11</accession>
<reference key="1">
    <citation type="journal article" date="2001" name="J. Biol. Chem.">
        <title>MST, a physiological caspase substrate, highly sensitizes apoptosis both upstream and downstream of caspase activation.</title>
        <authorList>
            <person name="Lee K.-K."/>
            <person name="Ohyama T."/>
            <person name="Yajima N."/>
            <person name="Tsubuki S."/>
            <person name="Yonehara S."/>
        </authorList>
    </citation>
    <scope>NUCLEOTIDE SEQUENCE [MRNA]</scope>
    <scope>PROTEOLYTIC PROCESSING</scope>
    <source>
        <strain>BALB/cJ</strain>
    </source>
</reference>
<reference key="2">
    <citation type="journal article" date="2005" name="Science">
        <title>The transcriptional landscape of the mammalian genome.</title>
        <authorList>
            <person name="Carninci P."/>
            <person name="Kasukawa T."/>
            <person name="Katayama S."/>
            <person name="Gough J."/>
            <person name="Frith M.C."/>
            <person name="Maeda N."/>
            <person name="Oyama R."/>
            <person name="Ravasi T."/>
            <person name="Lenhard B."/>
            <person name="Wells C."/>
            <person name="Kodzius R."/>
            <person name="Shimokawa K."/>
            <person name="Bajic V.B."/>
            <person name="Brenner S.E."/>
            <person name="Batalov S."/>
            <person name="Forrest A.R."/>
            <person name="Zavolan M."/>
            <person name="Davis M.J."/>
            <person name="Wilming L.G."/>
            <person name="Aidinis V."/>
            <person name="Allen J.E."/>
            <person name="Ambesi-Impiombato A."/>
            <person name="Apweiler R."/>
            <person name="Aturaliya R.N."/>
            <person name="Bailey T.L."/>
            <person name="Bansal M."/>
            <person name="Baxter L."/>
            <person name="Beisel K.W."/>
            <person name="Bersano T."/>
            <person name="Bono H."/>
            <person name="Chalk A.M."/>
            <person name="Chiu K.P."/>
            <person name="Choudhary V."/>
            <person name="Christoffels A."/>
            <person name="Clutterbuck D.R."/>
            <person name="Crowe M.L."/>
            <person name="Dalla E."/>
            <person name="Dalrymple B.P."/>
            <person name="de Bono B."/>
            <person name="Della Gatta G."/>
            <person name="di Bernardo D."/>
            <person name="Down T."/>
            <person name="Engstrom P."/>
            <person name="Fagiolini M."/>
            <person name="Faulkner G."/>
            <person name="Fletcher C.F."/>
            <person name="Fukushima T."/>
            <person name="Furuno M."/>
            <person name="Futaki S."/>
            <person name="Gariboldi M."/>
            <person name="Georgii-Hemming P."/>
            <person name="Gingeras T.R."/>
            <person name="Gojobori T."/>
            <person name="Green R.E."/>
            <person name="Gustincich S."/>
            <person name="Harbers M."/>
            <person name="Hayashi Y."/>
            <person name="Hensch T.K."/>
            <person name="Hirokawa N."/>
            <person name="Hill D."/>
            <person name="Huminiecki L."/>
            <person name="Iacono M."/>
            <person name="Ikeo K."/>
            <person name="Iwama A."/>
            <person name="Ishikawa T."/>
            <person name="Jakt M."/>
            <person name="Kanapin A."/>
            <person name="Katoh M."/>
            <person name="Kawasawa Y."/>
            <person name="Kelso J."/>
            <person name="Kitamura H."/>
            <person name="Kitano H."/>
            <person name="Kollias G."/>
            <person name="Krishnan S.P."/>
            <person name="Kruger A."/>
            <person name="Kummerfeld S.K."/>
            <person name="Kurochkin I.V."/>
            <person name="Lareau L.F."/>
            <person name="Lazarevic D."/>
            <person name="Lipovich L."/>
            <person name="Liu J."/>
            <person name="Liuni S."/>
            <person name="McWilliam S."/>
            <person name="Madan Babu M."/>
            <person name="Madera M."/>
            <person name="Marchionni L."/>
            <person name="Matsuda H."/>
            <person name="Matsuzawa S."/>
            <person name="Miki H."/>
            <person name="Mignone F."/>
            <person name="Miyake S."/>
            <person name="Morris K."/>
            <person name="Mottagui-Tabar S."/>
            <person name="Mulder N."/>
            <person name="Nakano N."/>
            <person name="Nakauchi H."/>
            <person name="Ng P."/>
            <person name="Nilsson R."/>
            <person name="Nishiguchi S."/>
            <person name="Nishikawa S."/>
            <person name="Nori F."/>
            <person name="Ohara O."/>
            <person name="Okazaki Y."/>
            <person name="Orlando V."/>
            <person name="Pang K.C."/>
            <person name="Pavan W.J."/>
            <person name="Pavesi G."/>
            <person name="Pesole G."/>
            <person name="Petrovsky N."/>
            <person name="Piazza S."/>
            <person name="Reed J."/>
            <person name="Reid J.F."/>
            <person name="Ring B.Z."/>
            <person name="Ringwald M."/>
            <person name="Rost B."/>
            <person name="Ruan Y."/>
            <person name="Salzberg S.L."/>
            <person name="Sandelin A."/>
            <person name="Schneider C."/>
            <person name="Schoenbach C."/>
            <person name="Sekiguchi K."/>
            <person name="Semple C.A."/>
            <person name="Seno S."/>
            <person name="Sessa L."/>
            <person name="Sheng Y."/>
            <person name="Shibata Y."/>
            <person name="Shimada H."/>
            <person name="Shimada K."/>
            <person name="Silva D."/>
            <person name="Sinclair B."/>
            <person name="Sperling S."/>
            <person name="Stupka E."/>
            <person name="Sugiura K."/>
            <person name="Sultana R."/>
            <person name="Takenaka Y."/>
            <person name="Taki K."/>
            <person name="Tammoja K."/>
            <person name="Tan S.L."/>
            <person name="Tang S."/>
            <person name="Taylor M.S."/>
            <person name="Tegner J."/>
            <person name="Teichmann S.A."/>
            <person name="Ueda H.R."/>
            <person name="van Nimwegen E."/>
            <person name="Verardo R."/>
            <person name="Wei C.L."/>
            <person name="Yagi K."/>
            <person name="Yamanishi H."/>
            <person name="Zabarovsky E."/>
            <person name="Zhu S."/>
            <person name="Zimmer A."/>
            <person name="Hide W."/>
            <person name="Bult C."/>
            <person name="Grimmond S.M."/>
            <person name="Teasdale R.D."/>
            <person name="Liu E.T."/>
            <person name="Brusic V."/>
            <person name="Quackenbush J."/>
            <person name="Wahlestedt C."/>
            <person name="Mattick J.S."/>
            <person name="Hume D.A."/>
            <person name="Kai C."/>
            <person name="Sasaki D."/>
            <person name="Tomaru Y."/>
            <person name="Fukuda S."/>
            <person name="Kanamori-Katayama M."/>
            <person name="Suzuki M."/>
            <person name="Aoki J."/>
            <person name="Arakawa T."/>
            <person name="Iida J."/>
            <person name="Imamura K."/>
            <person name="Itoh M."/>
            <person name="Kato T."/>
            <person name="Kawaji H."/>
            <person name="Kawagashira N."/>
            <person name="Kawashima T."/>
            <person name="Kojima M."/>
            <person name="Kondo S."/>
            <person name="Konno H."/>
            <person name="Nakano K."/>
            <person name="Ninomiya N."/>
            <person name="Nishio T."/>
            <person name="Okada M."/>
            <person name="Plessy C."/>
            <person name="Shibata K."/>
            <person name="Shiraki T."/>
            <person name="Suzuki S."/>
            <person name="Tagami M."/>
            <person name="Waki K."/>
            <person name="Watahiki A."/>
            <person name="Okamura-Oho Y."/>
            <person name="Suzuki H."/>
            <person name="Kawai J."/>
            <person name="Hayashizaki Y."/>
        </authorList>
    </citation>
    <scope>NUCLEOTIDE SEQUENCE [LARGE SCALE MRNA]</scope>
    <source>
        <strain>C57BL/6J</strain>
        <tissue>Skin</tissue>
    </source>
</reference>
<reference key="3">
    <citation type="journal article" date="2004" name="Genome Res.">
        <title>The status, quality, and expansion of the NIH full-length cDNA project: the Mammalian Gene Collection (MGC).</title>
        <authorList>
            <consortium name="The MGC Project Team"/>
        </authorList>
    </citation>
    <scope>NUCLEOTIDE SEQUENCE [LARGE SCALE MRNA]</scope>
    <source>
        <strain>C57BL/6J</strain>
        <tissue>Brain</tissue>
    </source>
</reference>
<reference key="4">
    <citation type="journal article" date="2004" name="Mol. Cell. Proteomics">
        <title>Phosphoproteomic analysis of the developing mouse brain.</title>
        <authorList>
            <person name="Ballif B.A."/>
            <person name="Villen J."/>
            <person name="Beausoleil S.A."/>
            <person name="Schwartz D."/>
            <person name="Gygi S.P."/>
        </authorList>
    </citation>
    <scope>PHOSPHORYLATION [LARGE SCALE ANALYSIS] AT SER-320</scope>
    <scope>IDENTIFICATION BY MASS SPECTROMETRY [LARGE SCALE ANALYSIS]</scope>
    <source>
        <tissue>Embryonic brain</tissue>
    </source>
</reference>
<reference key="5">
    <citation type="journal article" date="2007" name="J. Immunol.">
        <title>Quantitative time-resolved phosphoproteomic analysis of mast cell signaling.</title>
        <authorList>
            <person name="Cao L."/>
            <person name="Yu K."/>
            <person name="Banh C."/>
            <person name="Nguyen V."/>
            <person name="Ritz A."/>
            <person name="Raphael B.J."/>
            <person name="Kawakami Y."/>
            <person name="Kawakami T."/>
            <person name="Salomon A.R."/>
        </authorList>
    </citation>
    <scope>PHOSPHORYLATION [LARGE SCALE ANALYSIS] AT TYR-433</scope>
    <scope>IDENTIFICATION BY MASS SPECTROMETRY [LARGE SCALE ANALYSIS]</scope>
    <source>
        <tissue>Mast cell</tissue>
    </source>
</reference>
<reference key="6">
    <citation type="journal article" date="2010" name="Cell">
        <title>A tissue-specific atlas of mouse protein phosphorylation and expression.</title>
        <authorList>
            <person name="Huttlin E.L."/>
            <person name="Jedrychowski M.P."/>
            <person name="Elias J.E."/>
            <person name="Goswami T."/>
            <person name="Rad R."/>
            <person name="Beausoleil S.A."/>
            <person name="Villen J."/>
            <person name="Haas W."/>
            <person name="Sowa M.E."/>
            <person name="Gygi S.P."/>
        </authorList>
    </citation>
    <scope>PHOSPHORYLATION [LARGE SCALE ANALYSIS] AT SER-320</scope>
    <scope>IDENTIFICATION BY MASS SPECTROMETRY [LARGE SCALE ANALYSIS]</scope>
    <source>
        <tissue>Kidney</tissue>
        <tissue>Lung</tissue>
        <tissue>Spleen</tissue>
        <tissue>Testis</tissue>
    </source>
</reference>
<reference key="7">
    <citation type="journal article" date="2010" name="Proc. Natl. Acad. Sci. U.S.A.">
        <title>Hippo signaling is a potent in vivo growth and tumor suppressor pathway in the mammalian liver.</title>
        <authorList>
            <person name="Lu L."/>
            <person name="Li Y."/>
            <person name="Kim S.M."/>
            <person name="Bossuyt W."/>
            <person name="Liu P."/>
            <person name="Qiu Q."/>
            <person name="Wang Y."/>
            <person name="Halder G."/>
            <person name="Finegold M.J."/>
            <person name="Lee J.S."/>
            <person name="Johnson R.L."/>
        </authorList>
    </citation>
    <scope>FUNCTION</scope>
    <scope>DISRUPTION PHENOTYPE</scope>
</reference>
<reference key="8">
    <citation type="journal article" date="2016" name="Genes Dev.">
        <title>DLG5 connects cell polarity and Hippo signaling protein networks by linking PAR-1 with MST1/2.</title>
        <authorList>
            <person name="Kwan J."/>
            <person name="Sczaniecka A."/>
            <person name="Arash E.H."/>
            <person name="Nguyen L."/>
            <person name="Chen C.C."/>
            <person name="Ratkovic S."/>
            <person name="Klezovitch O."/>
            <person name="Attisano L."/>
            <person name="McNeill H."/>
            <person name="Emili A."/>
            <person name="Vasioukhin V."/>
        </authorList>
    </citation>
    <scope>INTERACTION WITH DLG5</scope>
</reference>
<organism>
    <name type="scientific">Mus musculus</name>
    <name type="common">Mouse</name>
    <dbReference type="NCBI Taxonomy" id="10090"/>
    <lineage>
        <taxon>Eukaryota</taxon>
        <taxon>Metazoa</taxon>
        <taxon>Chordata</taxon>
        <taxon>Craniata</taxon>
        <taxon>Vertebrata</taxon>
        <taxon>Euteleostomi</taxon>
        <taxon>Mammalia</taxon>
        <taxon>Eutheria</taxon>
        <taxon>Euarchontoglires</taxon>
        <taxon>Glires</taxon>
        <taxon>Rodentia</taxon>
        <taxon>Myomorpha</taxon>
        <taxon>Muroidea</taxon>
        <taxon>Muridae</taxon>
        <taxon>Murinae</taxon>
        <taxon>Mus</taxon>
        <taxon>Mus</taxon>
    </lineage>
</organism>
<keyword id="KW-0007">Acetylation</keyword>
<keyword id="KW-0053">Apoptosis</keyword>
<keyword id="KW-0067">ATP-binding</keyword>
<keyword id="KW-0175">Coiled coil</keyword>
<keyword id="KW-0963">Cytoplasm</keyword>
<keyword id="KW-0418">Kinase</keyword>
<keyword id="KW-0460">Magnesium</keyword>
<keyword id="KW-0479">Metal-binding</keyword>
<keyword id="KW-0547">Nucleotide-binding</keyword>
<keyword id="KW-0539">Nucleus</keyword>
<keyword id="KW-0597">Phosphoprotein</keyword>
<keyword id="KW-1185">Reference proteome</keyword>
<keyword id="KW-0723">Serine/threonine-protein kinase</keyword>
<keyword id="KW-0808">Transferase</keyword>
<sequence length="487" mass="55541">METVQLRNPPRRQLKKLDEDSLTKQPEEVFDVLEKLGEGSYGSVYKAIHKETGQIVAIKQVPVESDLQEIIKEISIMQQCDSPHVVKYYGSYFKNTDLWIVMEYCGAGSVSDIIRLRNKTLTEDEIATILQSTLKGLEYLHFMRKIHRDIKAGNILLNTEGHAKLADFGVAGQLTDTMAKRNTVIGTPFWMAPEVIQEIGYNCVADIWSLGITAIEMAEGKPPYADIHPMRAIFMIPTNPPPTFRKPELWSDNFMDFVKQCLVKSPEQRATATQLLQHPFVKSAKGVSILRDLINEAMDVKLKRQEAQQREVDQDDEENSEEDEMDSGTMVRAAGDEMGTVRVASTMSGGANTMIEHGDTLPSQLGTMVINTEDEEEEGTMKRRDETMQPAKPSFLEYFEQKEKENQINSFGKNVSGSLKNSSDWKIPQDGDYEFLKSWTVEDLQKRLLALDPMMEQEMEEIRQKYRSKRQPILDAIEAKKRRQQNF</sequence>